<accession>Q7N0P5</accession>
<sequence length="214" mass="24009">MRIILLGAPGAGKGTQAQFIVEKYGIPQISTGDMLRSAVKAGTELGLKAKALMDHGKLVTDELVIALVKERIKQDDCRNGFLLDGFPRTIPQADAMKEAGINVDYVLEFDVPDELIIERIIGRRIHAPSGRVYHIKFNPPVVENKDDVTGEELTVRKDDHEDIVRKRLVEYHQQTAPLVSYYQKEAEADYTKYFGIDGTRKVSEISEELSKILD</sequence>
<reference key="1">
    <citation type="journal article" date="2003" name="Nat. Biotechnol.">
        <title>The genome sequence of the entomopathogenic bacterium Photorhabdus luminescens.</title>
        <authorList>
            <person name="Duchaud E."/>
            <person name="Rusniok C."/>
            <person name="Frangeul L."/>
            <person name="Buchrieser C."/>
            <person name="Givaudan A."/>
            <person name="Taourit S."/>
            <person name="Bocs S."/>
            <person name="Boursaux-Eude C."/>
            <person name="Chandler M."/>
            <person name="Charles J.-F."/>
            <person name="Dassa E."/>
            <person name="Derose R."/>
            <person name="Derzelle S."/>
            <person name="Freyssinet G."/>
            <person name="Gaudriault S."/>
            <person name="Medigue C."/>
            <person name="Lanois A."/>
            <person name="Powell K."/>
            <person name="Siguier P."/>
            <person name="Vincent R."/>
            <person name="Wingate V."/>
            <person name="Zouine M."/>
            <person name="Glaser P."/>
            <person name="Boemare N."/>
            <person name="Danchin A."/>
            <person name="Kunst F."/>
        </authorList>
    </citation>
    <scope>NUCLEOTIDE SEQUENCE [LARGE SCALE GENOMIC DNA]</scope>
    <source>
        <strain>DSM 15139 / CIP 105565 / TT01</strain>
    </source>
</reference>
<keyword id="KW-0067">ATP-binding</keyword>
<keyword id="KW-0963">Cytoplasm</keyword>
<keyword id="KW-0418">Kinase</keyword>
<keyword id="KW-0545">Nucleotide biosynthesis</keyword>
<keyword id="KW-0547">Nucleotide-binding</keyword>
<keyword id="KW-1185">Reference proteome</keyword>
<keyword id="KW-0808">Transferase</keyword>
<dbReference type="EC" id="2.7.4.3" evidence="1"/>
<dbReference type="EMBL" id="BX571871">
    <property type="protein sequence ID" value="CAE16208.1"/>
    <property type="molecule type" value="Genomic_DNA"/>
</dbReference>
<dbReference type="RefSeq" id="WP_011147975.1">
    <property type="nucleotide sequence ID" value="NC_005126.1"/>
</dbReference>
<dbReference type="SMR" id="Q7N0P5"/>
<dbReference type="STRING" id="243265.plu3836"/>
<dbReference type="GeneID" id="48850066"/>
<dbReference type="KEGG" id="plu:plu3836"/>
<dbReference type="eggNOG" id="COG0563">
    <property type="taxonomic scope" value="Bacteria"/>
</dbReference>
<dbReference type="HOGENOM" id="CLU_032354_1_2_6"/>
<dbReference type="OrthoDB" id="9805030at2"/>
<dbReference type="UniPathway" id="UPA00588">
    <property type="reaction ID" value="UER00649"/>
</dbReference>
<dbReference type="Proteomes" id="UP000002514">
    <property type="component" value="Chromosome"/>
</dbReference>
<dbReference type="GO" id="GO:0005737">
    <property type="term" value="C:cytoplasm"/>
    <property type="evidence" value="ECO:0007669"/>
    <property type="project" value="UniProtKB-SubCell"/>
</dbReference>
<dbReference type="GO" id="GO:0004017">
    <property type="term" value="F:adenylate kinase activity"/>
    <property type="evidence" value="ECO:0007669"/>
    <property type="project" value="UniProtKB-UniRule"/>
</dbReference>
<dbReference type="GO" id="GO:0005524">
    <property type="term" value="F:ATP binding"/>
    <property type="evidence" value="ECO:0007669"/>
    <property type="project" value="UniProtKB-UniRule"/>
</dbReference>
<dbReference type="GO" id="GO:0044209">
    <property type="term" value="P:AMP salvage"/>
    <property type="evidence" value="ECO:0007669"/>
    <property type="project" value="UniProtKB-UniRule"/>
</dbReference>
<dbReference type="CDD" id="cd01428">
    <property type="entry name" value="ADK"/>
    <property type="match status" value="1"/>
</dbReference>
<dbReference type="FunFam" id="3.40.50.300:FF:000106">
    <property type="entry name" value="Adenylate kinase mitochondrial"/>
    <property type="match status" value="1"/>
</dbReference>
<dbReference type="Gene3D" id="3.40.50.300">
    <property type="entry name" value="P-loop containing nucleotide triphosphate hydrolases"/>
    <property type="match status" value="1"/>
</dbReference>
<dbReference type="HAMAP" id="MF_00235">
    <property type="entry name" value="Adenylate_kinase_Adk"/>
    <property type="match status" value="1"/>
</dbReference>
<dbReference type="InterPro" id="IPR006259">
    <property type="entry name" value="Adenyl_kin_sub"/>
</dbReference>
<dbReference type="InterPro" id="IPR000850">
    <property type="entry name" value="Adenylat/UMP-CMP_kin"/>
</dbReference>
<dbReference type="InterPro" id="IPR033690">
    <property type="entry name" value="Adenylat_kinase_CS"/>
</dbReference>
<dbReference type="InterPro" id="IPR007862">
    <property type="entry name" value="Adenylate_kinase_lid-dom"/>
</dbReference>
<dbReference type="InterPro" id="IPR027417">
    <property type="entry name" value="P-loop_NTPase"/>
</dbReference>
<dbReference type="NCBIfam" id="TIGR01351">
    <property type="entry name" value="adk"/>
    <property type="match status" value="1"/>
</dbReference>
<dbReference type="NCBIfam" id="NF001379">
    <property type="entry name" value="PRK00279.1-1"/>
    <property type="match status" value="1"/>
</dbReference>
<dbReference type="NCBIfam" id="NF001380">
    <property type="entry name" value="PRK00279.1-2"/>
    <property type="match status" value="1"/>
</dbReference>
<dbReference type="NCBIfam" id="NF001381">
    <property type="entry name" value="PRK00279.1-3"/>
    <property type="match status" value="1"/>
</dbReference>
<dbReference type="PANTHER" id="PTHR23359">
    <property type="entry name" value="NUCLEOTIDE KINASE"/>
    <property type="match status" value="1"/>
</dbReference>
<dbReference type="Pfam" id="PF00406">
    <property type="entry name" value="ADK"/>
    <property type="match status" value="1"/>
</dbReference>
<dbReference type="Pfam" id="PF05191">
    <property type="entry name" value="ADK_lid"/>
    <property type="match status" value="1"/>
</dbReference>
<dbReference type="PRINTS" id="PR00094">
    <property type="entry name" value="ADENYLTKNASE"/>
</dbReference>
<dbReference type="SUPFAM" id="SSF52540">
    <property type="entry name" value="P-loop containing nucleoside triphosphate hydrolases"/>
    <property type="match status" value="1"/>
</dbReference>
<dbReference type="PROSITE" id="PS00113">
    <property type="entry name" value="ADENYLATE_KINASE"/>
    <property type="match status" value="1"/>
</dbReference>
<organism>
    <name type="scientific">Photorhabdus laumondii subsp. laumondii (strain DSM 15139 / CIP 105565 / TT01)</name>
    <name type="common">Photorhabdus luminescens subsp. laumondii</name>
    <dbReference type="NCBI Taxonomy" id="243265"/>
    <lineage>
        <taxon>Bacteria</taxon>
        <taxon>Pseudomonadati</taxon>
        <taxon>Pseudomonadota</taxon>
        <taxon>Gammaproteobacteria</taxon>
        <taxon>Enterobacterales</taxon>
        <taxon>Morganellaceae</taxon>
        <taxon>Photorhabdus</taxon>
    </lineage>
</organism>
<comment type="function">
    <text evidence="1">Catalyzes the reversible transfer of the terminal phosphate group between ATP and AMP. Plays an important role in cellular energy homeostasis and in adenine nucleotide metabolism.</text>
</comment>
<comment type="catalytic activity">
    <reaction evidence="1">
        <text>AMP + ATP = 2 ADP</text>
        <dbReference type="Rhea" id="RHEA:12973"/>
        <dbReference type="ChEBI" id="CHEBI:30616"/>
        <dbReference type="ChEBI" id="CHEBI:456215"/>
        <dbReference type="ChEBI" id="CHEBI:456216"/>
        <dbReference type="EC" id="2.7.4.3"/>
    </reaction>
</comment>
<comment type="pathway">
    <text evidence="1">Purine metabolism; AMP biosynthesis via salvage pathway; AMP from ADP: step 1/1.</text>
</comment>
<comment type="subunit">
    <text evidence="1">Monomer.</text>
</comment>
<comment type="subcellular location">
    <subcellularLocation>
        <location evidence="1">Cytoplasm</location>
    </subcellularLocation>
</comment>
<comment type="domain">
    <text evidence="1">Consists of three domains, a large central CORE domain and two small peripheral domains, NMPbind and LID, which undergo movements during catalysis. The LID domain closes over the site of phosphoryl transfer upon ATP binding. Assembling and dissambling the active center during each catalytic cycle provides an effective means to prevent ATP hydrolysis.</text>
</comment>
<comment type="similarity">
    <text evidence="1">Belongs to the adenylate kinase family.</text>
</comment>
<gene>
    <name evidence="1" type="primary">adk</name>
    <name type="ordered locus">plu3836</name>
</gene>
<protein>
    <recommendedName>
        <fullName evidence="1">Adenylate kinase</fullName>
        <shortName evidence="1">AK</shortName>
        <ecNumber evidence="1">2.7.4.3</ecNumber>
    </recommendedName>
    <alternativeName>
        <fullName evidence="1">ATP-AMP transphosphorylase</fullName>
    </alternativeName>
    <alternativeName>
        <fullName evidence="1">ATP:AMP phosphotransferase</fullName>
    </alternativeName>
    <alternativeName>
        <fullName evidence="1">Adenylate monophosphate kinase</fullName>
    </alternativeName>
</protein>
<feature type="chain" id="PRO_0000158823" description="Adenylate kinase">
    <location>
        <begin position="1"/>
        <end position="214"/>
    </location>
</feature>
<feature type="region of interest" description="NMP" evidence="1">
    <location>
        <begin position="30"/>
        <end position="59"/>
    </location>
</feature>
<feature type="region of interest" description="LID">
    <location>
        <begin position="122"/>
        <end position="159"/>
    </location>
</feature>
<feature type="binding site" evidence="1">
    <location>
        <begin position="10"/>
        <end position="15"/>
    </location>
    <ligand>
        <name>ATP</name>
        <dbReference type="ChEBI" id="CHEBI:30616"/>
    </ligand>
</feature>
<feature type="binding site" evidence="1">
    <location>
        <position position="31"/>
    </location>
    <ligand>
        <name>AMP</name>
        <dbReference type="ChEBI" id="CHEBI:456215"/>
    </ligand>
</feature>
<feature type="binding site" evidence="1">
    <location>
        <position position="36"/>
    </location>
    <ligand>
        <name>AMP</name>
        <dbReference type="ChEBI" id="CHEBI:456215"/>
    </ligand>
</feature>
<feature type="binding site" evidence="1">
    <location>
        <begin position="57"/>
        <end position="59"/>
    </location>
    <ligand>
        <name>AMP</name>
        <dbReference type="ChEBI" id="CHEBI:456215"/>
    </ligand>
</feature>
<feature type="binding site" evidence="1">
    <location>
        <begin position="85"/>
        <end position="88"/>
    </location>
    <ligand>
        <name>AMP</name>
        <dbReference type="ChEBI" id="CHEBI:456215"/>
    </ligand>
</feature>
<feature type="binding site" evidence="1">
    <location>
        <position position="92"/>
    </location>
    <ligand>
        <name>AMP</name>
        <dbReference type="ChEBI" id="CHEBI:456215"/>
    </ligand>
</feature>
<feature type="binding site" evidence="1">
    <location>
        <position position="123"/>
    </location>
    <ligand>
        <name>ATP</name>
        <dbReference type="ChEBI" id="CHEBI:30616"/>
    </ligand>
</feature>
<feature type="binding site" evidence="1">
    <location>
        <begin position="132"/>
        <end position="133"/>
    </location>
    <ligand>
        <name>ATP</name>
        <dbReference type="ChEBI" id="CHEBI:30616"/>
    </ligand>
</feature>
<feature type="binding site" evidence="1">
    <location>
        <position position="156"/>
    </location>
    <ligand>
        <name>AMP</name>
        <dbReference type="ChEBI" id="CHEBI:456215"/>
    </ligand>
</feature>
<feature type="binding site" evidence="1">
    <location>
        <position position="167"/>
    </location>
    <ligand>
        <name>AMP</name>
        <dbReference type="ChEBI" id="CHEBI:456215"/>
    </ligand>
</feature>
<feature type="binding site" evidence="1">
    <location>
        <position position="200"/>
    </location>
    <ligand>
        <name>ATP</name>
        <dbReference type="ChEBI" id="CHEBI:30616"/>
    </ligand>
</feature>
<name>KAD_PHOLL</name>
<proteinExistence type="inferred from homology"/>
<evidence type="ECO:0000255" key="1">
    <source>
        <dbReference type="HAMAP-Rule" id="MF_00235"/>
    </source>
</evidence>